<comment type="function">
    <text evidence="1">Beta-glucosidases are one of a number of cellulolytic enzymes involved in the degradation of cellulosic biomass. Catalyzes the last step releasing glucose from the inhibitory cellobiose (By similarity).</text>
</comment>
<comment type="catalytic activity">
    <reaction>
        <text>Hydrolysis of terminal, non-reducing beta-D-glucosyl residues with release of beta-D-glucose.</text>
        <dbReference type="EC" id="3.2.1.21"/>
    </reaction>
</comment>
<comment type="pathway">
    <text>Glycan metabolism; cellulose degradation.</text>
</comment>
<comment type="subcellular location">
    <subcellularLocation>
        <location evidence="1">Cell membrane</location>
        <topology evidence="1">Single-pass type II membrane protein</topology>
    </subcellularLocation>
</comment>
<comment type="similarity">
    <text evidence="4">Belongs to the glycosyl hydrolase 3 family.</text>
</comment>
<evidence type="ECO:0000250" key="1"/>
<evidence type="ECO:0000255" key="2"/>
<evidence type="ECO:0000256" key="3">
    <source>
        <dbReference type="SAM" id="MobiDB-lite"/>
    </source>
</evidence>
<evidence type="ECO:0000305" key="4"/>
<sequence length="1033" mass="113423">MAPPDSTHGGSFRDHLKTNDRSSTSKGKQRYSPLQEAIPEEISSFRSPSEYADTDSDSDLERSGSYKLRPVDRYGSHHSSAFIPVIREENGVETYLDSITEAEQELLSASKQYDLVDDDDSSDFDSDEEATLRYRLKDRLKRRRARLQAWQPVKYARIWWRTLLAVVVTLVVVVWGFLSFAVSHREEPTVWPMVPSDSWFPSPKGGTLKHWEESYKKAQSLVRNMTLVEKVNITTGIGWQMGLCVGNTGPADIVKFPSLCLQDGPQGLRFADHVSAFPAGITTGSTWNRELMRERGVAMGREARLKGVNVLLGPSMGPLGMMPAGGRNWEGFGSDPVLQAVAAAETIRGIQSNGVMATAKHFVMNEQEHFRQPFEWGIPTALSSNVGDRALHEVFAWPFAESIRADVASVMCSYQMVNNSHACENSKLLNGILKDELGFQGFVQSDWLAQRSGINSALGGLDMSMPGDGLHWVDGKSLWGSELTRAVLNTSVPVERLNDMVTRIVAAWYHLGQDTWERPPPEGNGGPNFSSWTNDEVGWLHTGSNDGSYARVNHYVDAQGTGPEAHSIIARKVAAEGTVLLKNVDRTLPLSRNASSPSGGILRVGIYGDDAGPALGPNACPDRGCNQGTLATGWGSGTVEFPYLVSPIEALESAWSTEIESTAYLRNAVMPADAVDKDLCLVFVNADSGEGYISAGGIHGDRNDLFLQKGGDTLVRTVSSNCGGGQGKTVVVIHAVGPVVMESWIDLPGVHAVLLANLPGQESGNALVDVLFGEVDASGRLPYTIGKSLEDYGPGAQVLYEPNAPVPQVDFLDALYIDYRHFDRHNITPRFEFGFGLSYTTFELLDLSISPLQQKSRSVPPRPADAVAPPVYDISLPDPASALFPAGFQPVFKYIYPYLSNLDGTAPHNYSFYPKGYNETQRPSPAGGGAGGHPALYEEMVSVKLQVSNTGDRKGQEVVQVYVSFPPDFPERVLRNFTKIELEPSERREVQMTLSRKDLSYWSTREQNWVMPEGKFQIWVGRSSRDLPLMGEY</sequence>
<protein>
    <recommendedName>
        <fullName>Probable beta-glucosidase E</fullName>
        <ecNumber>3.2.1.21</ecNumber>
    </recommendedName>
    <alternativeName>
        <fullName>Beta-D-glucoside glucohydrolase E</fullName>
    </alternativeName>
    <alternativeName>
        <fullName>Cellobiase E</fullName>
    </alternativeName>
    <alternativeName>
        <fullName>Gentiobiase E</fullName>
    </alternativeName>
</protein>
<proteinExistence type="inferred from homology"/>
<gene>
    <name type="primary">bglE</name>
    <name type="ORF">AFUB_094720</name>
</gene>
<dbReference type="EC" id="3.2.1.21"/>
<dbReference type="EMBL" id="DS499602">
    <property type="protein sequence ID" value="EDP47625.1"/>
    <property type="molecule type" value="Genomic_DNA"/>
</dbReference>
<dbReference type="SMR" id="B0YD91"/>
<dbReference type="GlyCosmos" id="B0YD91">
    <property type="glycosylation" value="9 sites, No reported glycans"/>
</dbReference>
<dbReference type="EnsemblFungi" id="EDP47625">
    <property type="protein sequence ID" value="EDP47625"/>
    <property type="gene ID" value="AFUB_094720"/>
</dbReference>
<dbReference type="VEuPathDB" id="FungiDB:AFUB_094720"/>
<dbReference type="HOGENOM" id="CLU_004542_2_0_1"/>
<dbReference type="OrthoDB" id="122032at5052"/>
<dbReference type="PhylomeDB" id="B0YD91"/>
<dbReference type="UniPathway" id="UPA00696"/>
<dbReference type="Proteomes" id="UP000001699">
    <property type="component" value="Unassembled WGS sequence"/>
</dbReference>
<dbReference type="GO" id="GO:0005886">
    <property type="term" value="C:plasma membrane"/>
    <property type="evidence" value="ECO:0007669"/>
    <property type="project" value="UniProtKB-SubCell"/>
</dbReference>
<dbReference type="GO" id="GO:0008422">
    <property type="term" value="F:beta-glucosidase activity"/>
    <property type="evidence" value="ECO:0007669"/>
    <property type="project" value="UniProtKB-EC"/>
</dbReference>
<dbReference type="GO" id="GO:0030245">
    <property type="term" value="P:cellulose catabolic process"/>
    <property type="evidence" value="ECO:0007669"/>
    <property type="project" value="UniProtKB-UniPathway"/>
</dbReference>
<dbReference type="FunFam" id="3.20.20.300:FF:000002">
    <property type="entry name" value="Probable beta-glucosidase"/>
    <property type="match status" value="1"/>
</dbReference>
<dbReference type="FunFam" id="3.40.50.1700:FF:000003">
    <property type="entry name" value="Probable beta-glucosidase"/>
    <property type="match status" value="1"/>
</dbReference>
<dbReference type="Gene3D" id="3.40.50.1700">
    <property type="entry name" value="Glycoside hydrolase family 3 C-terminal domain"/>
    <property type="match status" value="1"/>
</dbReference>
<dbReference type="Gene3D" id="3.20.20.300">
    <property type="entry name" value="Glycoside hydrolase, family 3, N-terminal domain"/>
    <property type="match status" value="1"/>
</dbReference>
<dbReference type="Gene3D" id="2.60.40.10">
    <property type="entry name" value="Immunoglobulins"/>
    <property type="match status" value="1"/>
</dbReference>
<dbReference type="InterPro" id="IPR050288">
    <property type="entry name" value="Cellulose_deg_GH3"/>
</dbReference>
<dbReference type="InterPro" id="IPR026891">
    <property type="entry name" value="Fn3-like"/>
</dbReference>
<dbReference type="InterPro" id="IPR002772">
    <property type="entry name" value="Glyco_hydro_3_C"/>
</dbReference>
<dbReference type="InterPro" id="IPR036881">
    <property type="entry name" value="Glyco_hydro_3_C_sf"/>
</dbReference>
<dbReference type="InterPro" id="IPR001764">
    <property type="entry name" value="Glyco_hydro_3_N"/>
</dbReference>
<dbReference type="InterPro" id="IPR036962">
    <property type="entry name" value="Glyco_hydro_3_N_sf"/>
</dbReference>
<dbReference type="InterPro" id="IPR017853">
    <property type="entry name" value="Glycoside_hydrolase_SF"/>
</dbReference>
<dbReference type="InterPro" id="IPR013783">
    <property type="entry name" value="Ig-like_fold"/>
</dbReference>
<dbReference type="PANTHER" id="PTHR42715">
    <property type="entry name" value="BETA-GLUCOSIDASE"/>
    <property type="match status" value="1"/>
</dbReference>
<dbReference type="PANTHER" id="PTHR42715:SF20">
    <property type="entry name" value="BETA-GLUCOSIDASE E-RELATED"/>
    <property type="match status" value="1"/>
</dbReference>
<dbReference type="Pfam" id="PF14310">
    <property type="entry name" value="Fn3-like"/>
    <property type="match status" value="1"/>
</dbReference>
<dbReference type="Pfam" id="PF00933">
    <property type="entry name" value="Glyco_hydro_3"/>
    <property type="match status" value="1"/>
</dbReference>
<dbReference type="Pfam" id="PF01915">
    <property type="entry name" value="Glyco_hydro_3_C"/>
    <property type="match status" value="1"/>
</dbReference>
<dbReference type="PRINTS" id="PR00133">
    <property type="entry name" value="GLHYDRLASE3"/>
</dbReference>
<dbReference type="SMART" id="SM01217">
    <property type="entry name" value="Fn3_like"/>
    <property type="match status" value="1"/>
</dbReference>
<dbReference type="SUPFAM" id="SSF51445">
    <property type="entry name" value="(Trans)glycosidases"/>
    <property type="match status" value="1"/>
</dbReference>
<dbReference type="SUPFAM" id="SSF52279">
    <property type="entry name" value="Beta-D-glucan exohydrolase, C-terminal domain"/>
    <property type="match status" value="1"/>
</dbReference>
<keyword id="KW-0119">Carbohydrate metabolism</keyword>
<keyword id="KW-1003">Cell membrane</keyword>
<keyword id="KW-0136">Cellulose degradation</keyword>
<keyword id="KW-0325">Glycoprotein</keyword>
<keyword id="KW-0326">Glycosidase</keyword>
<keyword id="KW-0378">Hydrolase</keyword>
<keyword id="KW-0472">Membrane</keyword>
<keyword id="KW-0624">Polysaccharide degradation</keyword>
<keyword id="KW-0735">Signal-anchor</keyword>
<keyword id="KW-0812">Transmembrane</keyword>
<keyword id="KW-1133">Transmembrane helix</keyword>
<organism>
    <name type="scientific">Aspergillus fumigatus (strain CBS 144.89 / FGSC A1163 / CEA10)</name>
    <name type="common">Neosartorya fumigata</name>
    <dbReference type="NCBI Taxonomy" id="451804"/>
    <lineage>
        <taxon>Eukaryota</taxon>
        <taxon>Fungi</taxon>
        <taxon>Dikarya</taxon>
        <taxon>Ascomycota</taxon>
        <taxon>Pezizomycotina</taxon>
        <taxon>Eurotiomycetes</taxon>
        <taxon>Eurotiomycetidae</taxon>
        <taxon>Eurotiales</taxon>
        <taxon>Aspergillaceae</taxon>
        <taxon>Aspergillus</taxon>
        <taxon>Aspergillus subgen. Fumigati</taxon>
    </lineage>
</organism>
<reference key="1">
    <citation type="journal article" date="2008" name="PLoS Genet.">
        <title>Genomic islands in the pathogenic filamentous fungus Aspergillus fumigatus.</title>
        <authorList>
            <person name="Fedorova N.D."/>
            <person name="Khaldi N."/>
            <person name="Joardar V.S."/>
            <person name="Maiti R."/>
            <person name="Amedeo P."/>
            <person name="Anderson M.J."/>
            <person name="Crabtree J."/>
            <person name="Silva J.C."/>
            <person name="Badger J.H."/>
            <person name="Albarraq A."/>
            <person name="Angiuoli S."/>
            <person name="Bussey H."/>
            <person name="Bowyer P."/>
            <person name="Cotty P.J."/>
            <person name="Dyer P.S."/>
            <person name="Egan A."/>
            <person name="Galens K."/>
            <person name="Fraser-Liggett C.M."/>
            <person name="Haas B.J."/>
            <person name="Inman J.M."/>
            <person name="Kent R."/>
            <person name="Lemieux S."/>
            <person name="Malavazi I."/>
            <person name="Orvis J."/>
            <person name="Roemer T."/>
            <person name="Ronning C.M."/>
            <person name="Sundaram J.P."/>
            <person name="Sutton G."/>
            <person name="Turner G."/>
            <person name="Venter J.C."/>
            <person name="White O.R."/>
            <person name="Whitty B.R."/>
            <person name="Youngman P."/>
            <person name="Wolfe K.H."/>
            <person name="Goldman G.H."/>
            <person name="Wortman J.R."/>
            <person name="Jiang B."/>
            <person name="Denning D.W."/>
            <person name="Nierman W.C."/>
        </authorList>
    </citation>
    <scope>NUCLEOTIDE SEQUENCE [LARGE SCALE GENOMIC DNA]</scope>
    <source>
        <strain>CBS 144.89 / FGSC A1163 / CEA10</strain>
    </source>
</reference>
<name>BGLE_ASPFC</name>
<accession>B0YD91</accession>
<feature type="chain" id="PRO_0000394871" description="Probable beta-glucosidase E">
    <location>
        <begin position="1"/>
        <end position="1033"/>
    </location>
</feature>
<feature type="topological domain" description="Cytoplasmic" evidence="2">
    <location>
        <begin position="1"/>
        <end position="161"/>
    </location>
</feature>
<feature type="transmembrane region" description="Helical; Signal-anchor for type II membrane protein" evidence="2">
    <location>
        <begin position="162"/>
        <end position="182"/>
    </location>
</feature>
<feature type="topological domain" description="Extracellular" evidence="2">
    <location>
        <begin position="183"/>
        <end position="1033"/>
    </location>
</feature>
<feature type="region of interest" description="Disordered" evidence="3">
    <location>
        <begin position="1"/>
        <end position="71"/>
    </location>
</feature>
<feature type="compositionally biased region" description="Basic and acidic residues" evidence="3">
    <location>
        <begin position="11"/>
        <end position="20"/>
    </location>
</feature>
<feature type="compositionally biased region" description="Basic and acidic residues" evidence="3">
    <location>
        <begin position="59"/>
        <end position="71"/>
    </location>
</feature>
<feature type="active site" evidence="1">
    <location>
        <position position="446"/>
    </location>
</feature>
<feature type="glycosylation site" description="N-linked (GlcNAc...) asparagine" evidence="2">
    <location>
        <position position="224"/>
    </location>
</feature>
<feature type="glycosylation site" description="N-linked (GlcNAc...) asparagine" evidence="2">
    <location>
        <position position="232"/>
    </location>
</feature>
<feature type="glycosylation site" description="N-linked (GlcNAc...) asparagine" evidence="2">
    <location>
        <position position="418"/>
    </location>
</feature>
<feature type="glycosylation site" description="N-linked (GlcNAc...) asparagine" evidence="2">
    <location>
        <position position="489"/>
    </location>
</feature>
<feature type="glycosylation site" description="N-linked (GlcNAc...) asparagine" evidence="2">
    <location>
        <position position="528"/>
    </location>
</feature>
<feature type="glycosylation site" description="N-linked (GlcNAc...) asparagine" evidence="2">
    <location>
        <position position="593"/>
    </location>
</feature>
<feature type="glycosylation site" description="N-linked (GlcNAc...) asparagine" evidence="2">
    <location>
        <position position="909"/>
    </location>
</feature>
<feature type="glycosylation site" description="N-linked (GlcNAc...) asparagine" evidence="2">
    <location>
        <position position="918"/>
    </location>
</feature>
<feature type="glycosylation site" description="N-linked (GlcNAc...) asparagine" evidence="2">
    <location>
        <position position="976"/>
    </location>
</feature>